<sequence>MIVRTTTEITDTDRDITSEDGNWRSKRIVLGGDRVGFSFHETTIKAGSVNEFHYANHVEAVWLVEGTGKLIDLDNNKEYDLAPGSMYLLNGHERHRVEPDTQMRMLCVFNPPVTGREVHDENGVYPLVEVPA</sequence>
<proteinExistence type="inferred from homology"/>
<reference key="1">
    <citation type="submission" date="2005-03" db="EMBL/GenBank/DDBJ databases">
        <title>Comparison of the complete genome sequences of Rhodococcus erythropolis PR4 and Rhodococcus opacus B4.</title>
        <authorList>
            <person name="Takarada H."/>
            <person name="Sekine M."/>
            <person name="Hosoyama A."/>
            <person name="Yamada R."/>
            <person name="Fujisawa T."/>
            <person name="Omata S."/>
            <person name="Shimizu A."/>
            <person name="Tsukatani N."/>
            <person name="Tanikawa S."/>
            <person name="Fujita N."/>
            <person name="Harayama S."/>
        </authorList>
    </citation>
    <scope>NUCLEOTIDE SEQUENCE [LARGE SCALE GENOMIC DNA]</scope>
    <source>
        <strain>PR4 / NBRC 100887</strain>
    </source>
</reference>
<organism>
    <name type="scientific">Rhodococcus erythropolis (strain PR4 / NBRC 100887)</name>
    <dbReference type="NCBI Taxonomy" id="234621"/>
    <lineage>
        <taxon>Bacteria</taxon>
        <taxon>Bacillati</taxon>
        <taxon>Actinomycetota</taxon>
        <taxon>Actinomycetes</taxon>
        <taxon>Mycobacteriales</taxon>
        <taxon>Nocardiaceae</taxon>
        <taxon>Rhodococcus</taxon>
        <taxon>Rhodococcus erythropolis group</taxon>
    </lineage>
</organism>
<accession>C1A1L0</accession>
<gene>
    <name evidence="1" type="primary">ectC</name>
    <name type="ordered locus">RER_37870</name>
</gene>
<dbReference type="EC" id="4.2.1.108" evidence="1"/>
<dbReference type="EMBL" id="AP008957">
    <property type="protein sequence ID" value="BAH34495.1"/>
    <property type="molecule type" value="Genomic_DNA"/>
</dbReference>
<dbReference type="RefSeq" id="WP_003944463.1">
    <property type="nucleotide sequence ID" value="NC_012490.1"/>
</dbReference>
<dbReference type="SMR" id="C1A1L0"/>
<dbReference type="KEGG" id="rer:RER_37870"/>
<dbReference type="eggNOG" id="COG1917">
    <property type="taxonomic scope" value="Bacteria"/>
</dbReference>
<dbReference type="HOGENOM" id="CLU_154525_0_0_11"/>
<dbReference type="UniPathway" id="UPA00067">
    <property type="reaction ID" value="UER00123"/>
</dbReference>
<dbReference type="Proteomes" id="UP000002204">
    <property type="component" value="Chromosome"/>
</dbReference>
<dbReference type="GO" id="GO:0033990">
    <property type="term" value="F:ectoine synthase activity"/>
    <property type="evidence" value="ECO:0007669"/>
    <property type="project" value="UniProtKB-EC"/>
</dbReference>
<dbReference type="GO" id="GO:0019491">
    <property type="term" value="P:ectoine biosynthetic process"/>
    <property type="evidence" value="ECO:0007669"/>
    <property type="project" value="UniProtKB-UniRule"/>
</dbReference>
<dbReference type="CDD" id="cd06978">
    <property type="entry name" value="cupin_EctC"/>
    <property type="match status" value="1"/>
</dbReference>
<dbReference type="Gene3D" id="2.60.120.10">
    <property type="entry name" value="Jelly Rolls"/>
    <property type="match status" value="1"/>
</dbReference>
<dbReference type="HAMAP" id="MF_01255">
    <property type="entry name" value="Ectoine_synth"/>
    <property type="match status" value="1"/>
</dbReference>
<dbReference type="InterPro" id="IPR010462">
    <property type="entry name" value="Ectoine_synth"/>
</dbReference>
<dbReference type="InterPro" id="IPR014710">
    <property type="entry name" value="RmlC-like_jellyroll"/>
</dbReference>
<dbReference type="InterPro" id="IPR011051">
    <property type="entry name" value="RmlC_Cupin_sf"/>
</dbReference>
<dbReference type="NCBIfam" id="NF009806">
    <property type="entry name" value="PRK13290.1"/>
    <property type="match status" value="1"/>
</dbReference>
<dbReference type="PANTHER" id="PTHR39289">
    <property type="match status" value="1"/>
</dbReference>
<dbReference type="PANTHER" id="PTHR39289:SF1">
    <property type="entry name" value="L-ECTOINE SYNTHASE"/>
    <property type="match status" value="1"/>
</dbReference>
<dbReference type="Pfam" id="PF06339">
    <property type="entry name" value="Ectoine_synth"/>
    <property type="match status" value="1"/>
</dbReference>
<dbReference type="SUPFAM" id="SSF51182">
    <property type="entry name" value="RmlC-like cupins"/>
    <property type="match status" value="1"/>
</dbReference>
<comment type="function">
    <text evidence="1">Catalyzes the circularization of gamma-N-acetyl-alpha,gamma-diaminobutyric acid (ADABA) to ectoine (1,4,5,6-tetrahydro-2-methyl-4-pyrimidine carboxylic acid), which is an excellent osmoprotectant.</text>
</comment>
<comment type="catalytic activity">
    <reaction evidence="1">
        <text>(2S)-4-acetamido-2-aminobutanoate = L-ectoine + H2O</text>
        <dbReference type="Rhea" id="RHEA:17281"/>
        <dbReference type="ChEBI" id="CHEBI:15377"/>
        <dbReference type="ChEBI" id="CHEBI:58515"/>
        <dbReference type="ChEBI" id="CHEBI:58929"/>
        <dbReference type="EC" id="4.2.1.108"/>
    </reaction>
</comment>
<comment type="pathway">
    <text evidence="1">Amine and polyamine biosynthesis; ectoine biosynthesis; L-ectoine from L-aspartate 4-semialdehyde: step 3/3.</text>
</comment>
<comment type="similarity">
    <text evidence="1">Belongs to the ectoine synthase family.</text>
</comment>
<keyword id="KW-0456">Lyase</keyword>
<protein>
    <recommendedName>
        <fullName evidence="1">L-ectoine synthase</fullName>
        <ecNumber evidence="1">4.2.1.108</ecNumber>
    </recommendedName>
    <alternativeName>
        <fullName evidence="1">N-acetyldiaminobutyrate dehydratase</fullName>
    </alternativeName>
</protein>
<evidence type="ECO:0000255" key="1">
    <source>
        <dbReference type="HAMAP-Rule" id="MF_01255"/>
    </source>
</evidence>
<feature type="chain" id="PRO_1000214118" description="L-ectoine synthase">
    <location>
        <begin position="1"/>
        <end position="132"/>
    </location>
</feature>
<name>ECTC_RHOE4</name>